<keyword id="KW-0378">Hydrolase</keyword>
<keyword id="KW-0460">Magnesium</keyword>
<keyword id="KW-0479">Metal-binding</keyword>
<keyword id="KW-0540">Nuclease</keyword>
<keyword id="KW-1185">Reference proteome</keyword>
<keyword id="KW-1277">Toxin-antitoxin system</keyword>
<sequence length="149" mass="17733">MRRLKMEENKIFFDSNILIYHLCGKVEAKKLIEKVENKEICGFINPIVISEVLFFYIRATTNKRHYDIKKHPEILKSLDLDIVFELFSIFQILDLNSEIVKISREIIKKYCLLPNDALICSTCKFYKINKICSFDDDFKRVDFLEIIEI</sequence>
<protein>
    <recommendedName>
        <fullName evidence="1">Ribonuclease VapC2</fullName>
        <shortName evidence="1">RNase VapC2</shortName>
        <ecNumber evidence="1">3.1.-.-</ecNumber>
    </recommendedName>
    <alternativeName>
        <fullName evidence="1">Putative toxin VapC2</fullName>
    </alternativeName>
</protein>
<proteinExistence type="inferred from homology"/>
<name>VAPC2_METJA</name>
<reference key="1">
    <citation type="journal article" date="1996" name="Science">
        <title>Complete genome sequence of the methanogenic archaeon, Methanococcus jannaschii.</title>
        <authorList>
            <person name="Bult C.J."/>
            <person name="White O."/>
            <person name="Olsen G.J."/>
            <person name="Zhou L."/>
            <person name="Fleischmann R.D."/>
            <person name="Sutton G.G."/>
            <person name="Blake J.A."/>
            <person name="FitzGerald L.M."/>
            <person name="Clayton R.A."/>
            <person name="Gocayne J.D."/>
            <person name="Kerlavage A.R."/>
            <person name="Dougherty B.A."/>
            <person name="Tomb J.-F."/>
            <person name="Adams M.D."/>
            <person name="Reich C.I."/>
            <person name="Overbeek R."/>
            <person name="Kirkness E.F."/>
            <person name="Weinstock K.G."/>
            <person name="Merrick J.M."/>
            <person name="Glodek A."/>
            <person name="Scott J.L."/>
            <person name="Geoghagen N.S.M."/>
            <person name="Weidman J.F."/>
            <person name="Fuhrmann J.L."/>
            <person name="Nguyen D."/>
            <person name="Utterback T.R."/>
            <person name="Kelley J.M."/>
            <person name="Peterson J.D."/>
            <person name="Sadow P.W."/>
            <person name="Hanna M.C."/>
            <person name="Cotton M.D."/>
            <person name="Roberts K.M."/>
            <person name="Hurst M.A."/>
            <person name="Kaine B.P."/>
            <person name="Borodovsky M."/>
            <person name="Klenk H.-P."/>
            <person name="Fraser C.M."/>
            <person name="Smith H.O."/>
            <person name="Woese C.R."/>
            <person name="Venter J.C."/>
        </authorList>
    </citation>
    <scope>NUCLEOTIDE SEQUENCE [LARGE SCALE GENOMIC DNA]</scope>
    <source>
        <strain>ATCC 43067 / DSM 2661 / JAL-1 / JCM 10045 / NBRC 100440</strain>
    </source>
</reference>
<reference key="2">
    <citation type="journal article" date="2005" name="Nucleic Acids Res.">
        <title>Toxin-antitoxin loci are highly abundant in free-living but lost from host-associated prokaryotes.</title>
        <authorList>
            <person name="Pandey D.P."/>
            <person name="Gerdes K."/>
        </authorList>
    </citation>
    <scope>POSSIBLE FUNCTION</scope>
    <source>
        <strain>ATCC 43067 / DSM 2661 / JAL-1 / JCM 10045 / NBRC 100440</strain>
    </source>
</reference>
<accession>Q58384</accession>
<evidence type="ECO:0000255" key="1">
    <source>
        <dbReference type="HAMAP-Rule" id="MF_00265"/>
    </source>
</evidence>
<comment type="function">
    <text evidence="1">Toxic component of a type II toxin-antitoxin (TA) system. An RNase. Its cognate antitoxin is VapB2 (By similarity).</text>
</comment>
<comment type="cofactor">
    <cofactor evidence="1">
        <name>Mg(2+)</name>
        <dbReference type="ChEBI" id="CHEBI:18420"/>
    </cofactor>
</comment>
<comment type="similarity">
    <text evidence="1">Belongs to the PINc/VapC protein family.</text>
</comment>
<feature type="chain" id="PRO_0000107125" description="Ribonuclease VapC2">
    <location>
        <begin position="1"/>
        <end position="149"/>
    </location>
</feature>
<feature type="domain" description="PINc" evidence="1">
    <location>
        <begin position="11"/>
        <end position="149"/>
    </location>
</feature>
<feature type="binding site" evidence="1">
    <location>
        <position position="14"/>
    </location>
    <ligand>
        <name>Mg(2+)</name>
        <dbReference type="ChEBI" id="CHEBI:18420"/>
    </ligand>
</feature>
<feature type="binding site" evidence="1">
    <location>
        <position position="116"/>
    </location>
    <ligand>
        <name>Mg(2+)</name>
        <dbReference type="ChEBI" id="CHEBI:18420"/>
    </ligand>
</feature>
<dbReference type="EC" id="3.1.-.-" evidence="1"/>
<dbReference type="EMBL" id="L77117">
    <property type="protein sequence ID" value="AAB98979.1"/>
    <property type="molecule type" value="Genomic_DNA"/>
</dbReference>
<dbReference type="PIR" id="F64421">
    <property type="entry name" value="F64421"/>
</dbReference>
<dbReference type="SMR" id="Q58384"/>
<dbReference type="STRING" id="243232.MJ_0974"/>
<dbReference type="PaxDb" id="243232-MJ_0974"/>
<dbReference type="EnsemblBacteria" id="AAB98979">
    <property type="protein sequence ID" value="AAB98979"/>
    <property type="gene ID" value="MJ_0974"/>
</dbReference>
<dbReference type="KEGG" id="mja:MJ_0974"/>
<dbReference type="eggNOG" id="arCOG00710">
    <property type="taxonomic scope" value="Archaea"/>
</dbReference>
<dbReference type="HOGENOM" id="CLU_134210_1_1_2"/>
<dbReference type="InParanoid" id="Q58384"/>
<dbReference type="OrthoDB" id="147997at2157"/>
<dbReference type="PhylomeDB" id="Q58384"/>
<dbReference type="Proteomes" id="UP000000805">
    <property type="component" value="Chromosome"/>
</dbReference>
<dbReference type="GO" id="GO:0000287">
    <property type="term" value="F:magnesium ion binding"/>
    <property type="evidence" value="ECO:0007669"/>
    <property type="project" value="UniProtKB-UniRule"/>
</dbReference>
<dbReference type="GO" id="GO:0004540">
    <property type="term" value="F:RNA nuclease activity"/>
    <property type="evidence" value="ECO:0007669"/>
    <property type="project" value="InterPro"/>
</dbReference>
<dbReference type="CDD" id="cd18677">
    <property type="entry name" value="PIN_MjVapC2-VapC6_like"/>
    <property type="match status" value="1"/>
</dbReference>
<dbReference type="Gene3D" id="3.40.50.1010">
    <property type="entry name" value="5'-nuclease"/>
    <property type="match status" value="1"/>
</dbReference>
<dbReference type="HAMAP" id="MF_00265">
    <property type="entry name" value="VapC_Nob1"/>
    <property type="match status" value="1"/>
</dbReference>
<dbReference type="InterPro" id="IPR029060">
    <property type="entry name" value="PIN-like_dom_sf"/>
</dbReference>
<dbReference type="InterPro" id="IPR002716">
    <property type="entry name" value="PIN_dom"/>
</dbReference>
<dbReference type="InterPro" id="IPR022907">
    <property type="entry name" value="VapC_family"/>
</dbReference>
<dbReference type="PANTHER" id="PTHR39677">
    <property type="entry name" value="RIBONUCLEASE VAPC6"/>
    <property type="match status" value="1"/>
</dbReference>
<dbReference type="PANTHER" id="PTHR39677:SF4">
    <property type="entry name" value="RIBONUCLEASE VAPC6"/>
    <property type="match status" value="1"/>
</dbReference>
<dbReference type="Pfam" id="PF01850">
    <property type="entry name" value="PIN"/>
    <property type="match status" value="1"/>
</dbReference>
<dbReference type="SMART" id="SM00670">
    <property type="entry name" value="PINc"/>
    <property type="match status" value="1"/>
</dbReference>
<dbReference type="SUPFAM" id="SSF88723">
    <property type="entry name" value="PIN domain-like"/>
    <property type="match status" value="1"/>
</dbReference>
<gene>
    <name evidence="1" type="primary">vapC2</name>
    <name type="ordered locus">MJ0974</name>
</gene>
<organism>
    <name type="scientific">Methanocaldococcus jannaschii (strain ATCC 43067 / DSM 2661 / JAL-1 / JCM 10045 / NBRC 100440)</name>
    <name type="common">Methanococcus jannaschii</name>
    <dbReference type="NCBI Taxonomy" id="243232"/>
    <lineage>
        <taxon>Archaea</taxon>
        <taxon>Methanobacteriati</taxon>
        <taxon>Methanobacteriota</taxon>
        <taxon>Methanomada group</taxon>
        <taxon>Methanococci</taxon>
        <taxon>Methanococcales</taxon>
        <taxon>Methanocaldococcaceae</taxon>
        <taxon>Methanocaldococcus</taxon>
    </lineage>
</organism>